<gene>
    <name type="primary">ssb</name>
    <name type="ordered locus">SpyM3_1581</name>
</gene>
<sequence length="163" mass="17982">MINNVVLVGRMTKDAELRYTPSQVAVATFTLAVNRTFKSQNGEREADFINCVIWRQPAENLANWAKKGALIGVTGRIQTRNYENQQGQRVYVTEVVADNFQMLESRATREGGSTGSFNGGFNNNTSSSNSYSAPAQQTPNFGRDDSPFGNSNPMDISDDDLPF</sequence>
<name>SSB_STRP3</name>
<keyword id="KW-0227">DNA damage</keyword>
<keyword id="KW-0233">DNA recombination</keyword>
<keyword id="KW-0234">DNA repair</keyword>
<keyword id="KW-0235">DNA replication</keyword>
<keyword id="KW-0238">DNA-binding</keyword>
<dbReference type="EMBL" id="AE014074">
    <property type="protein sequence ID" value="AAM80188.1"/>
    <property type="molecule type" value="Genomic_DNA"/>
</dbReference>
<dbReference type="RefSeq" id="WP_002983122.1">
    <property type="nucleotide sequence ID" value="NC_004070.1"/>
</dbReference>
<dbReference type="SMR" id="P0DF76"/>
<dbReference type="KEGG" id="spg:SpyM3_1581"/>
<dbReference type="HOGENOM" id="CLU_078758_6_2_9"/>
<dbReference type="Proteomes" id="UP000000564">
    <property type="component" value="Chromosome"/>
</dbReference>
<dbReference type="GO" id="GO:0009295">
    <property type="term" value="C:nucleoid"/>
    <property type="evidence" value="ECO:0007669"/>
    <property type="project" value="TreeGrafter"/>
</dbReference>
<dbReference type="GO" id="GO:0003697">
    <property type="term" value="F:single-stranded DNA binding"/>
    <property type="evidence" value="ECO:0007669"/>
    <property type="project" value="UniProtKB-UniRule"/>
</dbReference>
<dbReference type="GO" id="GO:0006310">
    <property type="term" value="P:DNA recombination"/>
    <property type="evidence" value="ECO:0007669"/>
    <property type="project" value="UniProtKB-UniRule"/>
</dbReference>
<dbReference type="GO" id="GO:0006281">
    <property type="term" value="P:DNA repair"/>
    <property type="evidence" value="ECO:0007669"/>
    <property type="project" value="UniProtKB-UniRule"/>
</dbReference>
<dbReference type="GO" id="GO:0006260">
    <property type="term" value="P:DNA replication"/>
    <property type="evidence" value="ECO:0007669"/>
    <property type="project" value="UniProtKB-UniRule"/>
</dbReference>
<dbReference type="CDD" id="cd04496">
    <property type="entry name" value="SSB_OBF"/>
    <property type="match status" value="1"/>
</dbReference>
<dbReference type="FunFam" id="2.40.50.140:FF:000084">
    <property type="entry name" value="Single-stranded DNA-binding protein"/>
    <property type="match status" value="1"/>
</dbReference>
<dbReference type="Gene3D" id="2.40.50.140">
    <property type="entry name" value="Nucleic acid-binding proteins"/>
    <property type="match status" value="1"/>
</dbReference>
<dbReference type="HAMAP" id="MF_00984">
    <property type="entry name" value="SSB"/>
    <property type="match status" value="1"/>
</dbReference>
<dbReference type="InterPro" id="IPR012340">
    <property type="entry name" value="NA-bd_OB-fold"/>
</dbReference>
<dbReference type="InterPro" id="IPR000424">
    <property type="entry name" value="Primosome_PriB/ssb"/>
</dbReference>
<dbReference type="InterPro" id="IPR011344">
    <property type="entry name" value="ssDNA-bd"/>
</dbReference>
<dbReference type="NCBIfam" id="NF005580">
    <property type="entry name" value="PRK07275.1"/>
    <property type="match status" value="1"/>
</dbReference>
<dbReference type="NCBIfam" id="TIGR00621">
    <property type="entry name" value="ssb"/>
    <property type="match status" value="1"/>
</dbReference>
<dbReference type="PANTHER" id="PTHR10302">
    <property type="entry name" value="SINGLE-STRANDED DNA-BINDING PROTEIN"/>
    <property type="match status" value="1"/>
</dbReference>
<dbReference type="PANTHER" id="PTHR10302:SF27">
    <property type="entry name" value="SINGLE-STRANDED DNA-BINDING PROTEIN"/>
    <property type="match status" value="1"/>
</dbReference>
<dbReference type="Pfam" id="PF00436">
    <property type="entry name" value="SSB"/>
    <property type="match status" value="1"/>
</dbReference>
<dbReference type="PIRSF" id="PIRSF002070">
    <property type="entry name" value="SSB"/>
    <property type="match status" value="1"/>
</dbReference>
<dbReference type="SUPFAM" id="SSF50249">
    <property type="entry name" value="Nucleic acid-binding proteins"/>
    <property type="match status" value="1"/>
</dbReference>
<dbReference type="PROSITE" id="PS50935">
    <property type="entry name" value="SSB"/>
    <property type="match status" value="1"/>
</dbReference>
<evidence type="ECO:0000255" key="1">
    <source>
        <dbReference type="HAMAP-Rule" id="MF_00984"/>
    </source>
</evidence>
<evidence type="ECO:0000256" key="2">
    <source>
        <dbReference type="SAM" id="MobiDB-lite"/>
    </source>
</evidence>
<feature type="chain" id="PRO_0000096119" description="Single-stranded DNA-binding protein">
    <location>
        <begin position="1"/>
        <end position="163"/>
    </location>
</feature>
<feature type="domain" description="SSB" evidence="1">
    <location>
        <begin position="1"/>
        <end position="104"/>
    </location>
</feature>
<feature type="region of interest" description="Disordered" evidence="2">
    <location>
        <begin position="109"/>
        <end position="163"/>
    </location>
</feature>
<feature type="short sequence motif" description="Important for interaction with partner proteins" evidence="1">
    <location>
        <begin position="158"/>
        <end position="163"/>
    </location>
</feature>
<feature type="compositionally biased region" description="Low complexity" evidence="2">
    <location>
        <begin position="119"/>
        <end position="130"/>
    </location>
</feature>
<feature type="compositionally biased region" description="Polar residues" evidence="2">
    <location>
        <begin position="131"/>
        <end position="140"/>
    </location>
</feature>
<accession>P0DF76</accession>
<accession>P66853</accession>
<accession>Q99Y80</accession>
<organism>
    <name type="scientific">Streptococcus pyogenes serotype M3 (strain ATCC BAA-595 / MGAS315)</name>
    <dbReference type="NCBI Taxonomy" id="198466"/>
    <lineage>
        <taxon>Bacteria</taxon>
        <taxon>Bacillati</taxon>
        <taxon>Bacillota</taxon>
        <taxon>Bacilli</taxon>
        <taxon>Lactobacillales</taxon>
        <taxon>Streptococcaceae</taxon>
        <taxon>Streptococcus</taxon>
    </lineage>
</organism>
<reference key="1">
    <citation type="journal article" date="2002" name="Proc. Natl. Acad. Sci. U.S.A.">
        <title>Genome sequence of a serotype M3 strain of group A Streptococcus: phage-encoded toxins, the high-virulence phenotype, and clone emergence.</title>
        <authorList>
            <person name="Beres S.B."/>
            <person name="Sylva G.L."/>
            <person name="Barbian K.D."/>
            <person name="Lei B."/>
            <person name="Hoff J.S."/>
            <person name="Mammarella N.D."/>
            <person name="Liu M.-Y."/>
            <person name="Smoot J.C."/>
            <person name="Porcella S.F."/>
            <person name="Parkins L.D."/>
            <person name="Campbell D.S."/>
            <person name="Smith T.M."/>
            <person name="McCormick J.K."/>
            <person name="Leung D.Y.M."/>
            <person name="Schlievert P.M."/>
            <person name="Musser J.M."/>
        </authorList>
    </citation>
    <scope>NUCLEOTIDE SEQUENCE [LARGE SCALE GENOMIC DNA]</scope>
    <source>
        <strain>ATCC BAA-595 / MGAS315</strain>
    </source>
</reference>
<protein>
    <recommendedName>
        <fullName evidence="1">Single-stranded DNA-binding protein</fullName>
        <shortName evidence="1">SSB</shortName>
    </recommendedName>
</protein>
<proteinExistence type="inferred from homology"/>
<comment type="function">
    <text evidence="1">Plays an important role in DNA replication, recombination and repair. Binds to ssDNA and to an array of partner proteins to recruit them to their sites of action during DNA metabolism.</text>
</comment>
<comment type="subunit">
    <text evidence="1">Homotetramer.</text>
</comment>